<keyword id="KW-0150">Chloroplast</keyword>
<keyword id="KW-0934">Plastid</keyword>
<keyword id="KW-0687">Ribonucleoprotein</keyword>
<keyword id="KW-0689">Ribosomal protein</keyword>
<organism>
    <name type="scientific">Pisum sativum</name>
    <name type="common">Garden pea</name>
    <name type="synonym">Lathyrus oleraceus</name>
    <dbReference type="NCBI Taxonomy" id="3888"/>
    <lineage>
        <taxon>Eukaryota</taxon>
        <taxon>Viridiplantae</taxon>
        <taxon>Streptophyta</taxon>
        <taxon>Embryophyta</taxon>
        <taxon>Tracheophyta</taxon>
        <taxon>Spermatophyta</taxon>
        <taxon>Magnoliopsida</taxon>
        <taxon>eudicotyledons</taxon>
        <taxon>Gunneridae</taxon>
        <taxon>Pentapetalae</taxon>
        <taxon>rosids</taxon>
        <taxon>fabids</taxon>
        <taxon>Fabales</taxon>
        <taxon>Fabaceae</taxon>
        <taxon>Papilionoideae</taxon>
        <taxon>50 kb inversion clade</taxon>
        <taxon>NPAAA clade</taxon>
        <taxon>Hologalegina</taxon>
        <taxon>IRL clade</taxon>
        <taxon>Fabeae</taxon>
        <taxon>Pisum</taxon>
    </lineage>
</organism>
<gene>
    <name type="primary">rps2</name>
</gene>
<sequence>MTKRYWNITFEEMMEAGVHFGHDTRKWNPRMAPFISAKRKGIHITNLTKTARFLSEACDLAFDAASKGKQFLIVGTKKKAADSVTRAAIRARCHYVNKKWLRGMLTNWYTTETRLGKFRDLRTEQKTGKLNSLPKRDAAMLKRQLSHFETYLGGIKYMTGLPDIVIIVDQQKEYTALQECITLGIPTICLIDTNCDPDLADMSIPANDDAIASIRLILNKLVFAICEGRSSSIRNY</sequence>
<accession>P08241</accession>
<dbReference type="EMBL" id="X03912">
    <property type="protein sequence ID" value="CAA27546.1"/>
    <property type="molecule type" value="Genomic_DNA"/>
</dbReference>
<dbReference type="EMBL" id="X05917">
    <property type="protein sequence ID" value="CAA29348.1"/>
    <property type="molecule type" value="Genomic_DNA"/>
</dbReference>
<dbReference type="PIR" id="S08586">
    <property type="entry name" value="R3PM2"/>
</dbReference>
<dbReference type="RefSeq" id="YP_003587565.1">
    <property type="nucleotide sequence ID" value="NC_014057.1"/>
</dbReference>
<dbReference type="SMR" id="P08241"/>
<dbReference type="EnsemblPlants" id="Psat6g219440.1">
    <property type="protein sequence ID" value="Psat6g219440.1.cds1"/>
    <property type="gene ID" value="Psat6g219440"/>
</dbReference>
<dbReference type="GeneID" id="9073117"/>
<dbReference type="Gramene" id="Psat6g219440.1">
    <property type="protein sequence ID" value="Psat6g219440.1.cds1"/>
    <property type="gene ID" value="Psat6g219440"/>
</dbReference>
<dbReference type="OrthoDB" id="1341384at2759"/>
<dbReference type="GO" id="GO:0009507">
    <property type="term" value="C:chloroplast"/>
    <property type="evidence" value="ECO:0007669"/>
    <property type="project" value="UniProtKB-SubCell"/>
</dbReference>
<dbReference type="GO" id="GO:0005763">
    <property type="term" value="C:mitochondrial small ribosomal subunit"/>
    <property type="evidence" value="ECO:0007669"/>
    <property type="project" value="TreeGrafter"/>
</dbReference>
<dbReference type="GO" id="GO:0003735">
    <property type="term" value="F:structural constituent of ribosome"/>
    <property type="evidence" value="ECO:0007669"/>
    <property type="project" value="InterPro"/>
</dbReference>
<dbReference type="GO" id="GO:0006412">
    <property type="term" value="P:translation"/>
    <property type="evidence" value="ECO:0007669"/>
    <property type="project" value="UniProtKB-UniRule"/>
</dbReference>
<dbReference type="CDD" id="cd01425">
    <property type="entry name" value="RPS2"/>
    <property type="match status" value="1"/>
</dbReference>
<dbReference type="FunFam" id="3.40.50.10490:FF:000101">
    <property type="match status" value="1"/>
</dbReference>
<dbReference type="FunFam" id="1.10.287.610:FF:000001">
    <property type="entry name" value="30S ribosomal protein S2"/>
    <property type="match status" value="1"/>
</dbReference>
<dbReference type="Gene3D" id="3.40.50.10490">
    <property type="entry name" value="Glucose-6-phosphate isomerase like protein, domain 1"/>
    <property type="match status" value="1"/>
</dbReference>
<dbReference type="Gene3D" id="1.10.287.610">
    <property type="entry name" value="Helix hairpin bin"/>
    <property type="match status" value="1"/>
</dbReference>
<dbReference type="HAMAP" id="MF_00291_B">
    <property type="entry name" value="Ribosomal_uS2_B"/>
    <property type="match status" value="1"/>
</dbReference>
<dbReference type="InterPro" id="IPR001865">
    <property type="entry name" value="Ribosomal_uS2"/>
</dbReference>
<dbReference type="InterPro" id="IPR005706">
    <property type="entry name" value="Ribosomal_uS2_bac/mit/plastid"/>
</dbReference>
<dbReference type="InterPro" id="IPR018130">
    <property type="entry name" value="Ribosomal_uS2_CS"/>
</dbReference>
<dbReference type="InterPro" id="IPR023591">
    <property type="entry name" value="Ribosomal_uS2_flav_dom_sf"/>
</dbReference>
<dbReference type="NCBIfam" id="TIGR01011">
    <property type="entry name" value="rpsB_bact"/>
    <property type="match status" value="1"/>
</dbReference>
<dbReference type="PANTHER" id="PTHR12534">
    <property type="entry name" value="30S RIBOSOMAL PROTEIN S2 PROKARYOTIC AND ORGANELLAR"/>
    <property type="match status" value="1"/>
</dbReference>
<dbReference type="PANTHER" id="PTHR12534:SF0">
    <property type="entry name" value="SMALL RIBOSOMAL SUBUNIT PROTEIN US2M"/>
    <property type="match status" value="1"/>
</dbReference>
<dbReference type="Pfam" id="PF00318">
    <property type="entry name" value="Ribosomal_S2"/>
    <property type="match status" value="1"/>
</dbReference>
<dbReference type="PRINTS" id="PR00395">
    <property type="entry name" value="RIBOSOMALS2"/>
</dbReference>
<dbReference type="SUPFAM" id="SSF52313">
    <property type="entry name" value="Ribosomal protein S2"/>
    <property type="match status" value="1"/>
</dbReference>
<dbReference type="PROSITE" id="PS00962">
    <property type="entry name" value="RIBOSOMAL_S2_1"/>
    <property type="match status" value="1"/>
</dbReference>
<dbReference type="PROSITE" id="PS00963">
    <property type="entry name" value="RIBOSOMAL_S2_2"/>
    <property type="match status" value="1"/>
</dbReference>
<protein>
    <recommendedName>
        <fullName evidence="1">Small ribosomal subunit protein uS2c</fullName>
    </recommendedName>
    <alternativeName>
        <fullName>30S ribosomal protein S2, chloroplastic</fullName>
    </alternativeName>
</protein>
<feature type="chain" id="PRO_0000134309" description="Small ribosomal subunit protein uS2c">
    <location>
        <begin position="1"/>
        <end position="236"/>
    </location>
</feature>
<geneLocation type="chloroplast"/>
<comment type="subcellular location">
    <subcellularLocation>
        <location>Plastid</location>
        <location>Chloroplast</location>
    </subcellularLocation>
</comment>
<comment type="similarity">
    <text evidence="1">Belongs to the universal ribosomal protein uS2 family.</text>
</comment>
<name>RR2_PEA</name>
<evidence type="ECO:0000305" key="1"/>
<proteinExistence type="inferred from homology"/>
<reference key="1">
    <citation type="journal article" date="1986" name="Biochem. J.">
        <title>Pea chloroplast DNA encodes homologues of Escherichia coli ribosomal subunit S2 and the beta'-subunit of RNA polymerase.</title>
        <authorList>
            <person name="Cozens A.L."/>
            <person name="Walker J.E."/>
        </authorList>
    </citation>
    <scope>NUCLEOTIDE SEQUENCE [GENOMIC DNA]</scope>
</reference>
<reference key="2">
    <citation type="journal article" date="1987" name="J. Mol. Biol.">
        <title>A gene cluster in the spinach and pea chloroplast genomes encoding one CF1 and three CF0 subunits of the H+-ATP synthase complex and the ribosomal protein S2.</title>
        <authorList>
            <person name="Hudson G.S."/>
            <person name="Mason J.G."/>
            <person name="Holton T.A."/>
            <person name="Koller B."/>
            <person name="Cox G.B."/>
            <person name="Whitfeld P.R."/>
            <person name="Bottomley W."/>
        </authorList>
    </citation>
    <scope>NUCLEOTIDE SEQUENCE [GENOMIC DNA] OF 185-236</scope>
</reference>